<reference key="1">
    <citation type="journal article" date="2008" name="J. Bacteriol.">
        <title>Genome sequence of the streptomycin-producing microorganism Streptomyces griseus IFO 13350.</title>
        <authorList>
            <person name="Ohnishi Y."/>
            <person name="Ishikawa J."/>
            <person name="Hara H."/>
            <person name="Suzuki H."/>
            <person name="Ikenoya M."/>
            <person name="Ikeda H."/>
            <person name="Yamashita A."/>
            <person name="Hattori M."/>
            <person name="Horinouchi S."/>
        </authorList>
    </citation>
    <scope>NUCLEOTIDE SEQUENCE [LARGE SCALE GENOMIC DNA]</scope>
    <source>
        <strain>JCM 4626 / CBS 651.72 / NBRC 13350 / KCC S-0626 / ISP 5235</strain>
    </source>
</reference>
<name>EX7L_STRGG</name>
<evidence type="ECO:0000255" key="1">
    <source>
        <dbReference type="HAMAP-Rule" id="MF_00378"/>
    </source>
</evidence>
<accession>B1W2D9</accession>
<proteinExistence type="inferred from homology"/>
<gene>
    <name evidence="1" type="primary">xseA</name>
    <name type="ordered locus">SGR_2474</name>
</gene>
<comment type="function">
    <text evidence="1">Bidirectionally degrades single-stranded DNA into large acid-insoluble oligonucleotides, which are then degraded further into small acid-soluble oligonucleotides.</text>
</comment>
<comment type="catalytic activity">
    <reaction evidence="1">
        <text>Exonucleolytic cleavage in either 5'- to 3'- or 3'- to 5'-direction to yield nucleoside 5'-phosphates.</text>
        <dbReference type="EC" id="3.1.11.6"/>
    </reaction>
</comment>
<comment type="subunit">
    <text evidence="1">Heterooligomer composed of large and small subunits.</text>
</comment>
<comment type="subcellular location">
    <subcellularLocation>
        <location evidence="1">Cytoplasm</location>
    </subcellularLocation>
</comment>
<comment type="similarity">
    <text evidence="1">Belongs to the XseA family.</text>
</comment>
<organism>
    <name type="scientific">Streptomyces griseus subsp. griseus (strain JCM 4626 / CBS 651.72 / NBRC 13350 / KCC S-0626 / ISP 5235)</name>
    <dbReference type="NCBI Taxonomy" id="455632"/>
    <lineage>
        <taxon>Bacteria</taxon>
        <taxon>Bacillati</taxon>
        <taxon>Actinomycetota</taxon>
        <taxon>Actinomycetes</taxon>
        <taxon>Kitasatosporales</taxon>
        <taxon>Streptomycetaceae</taxon>
        <taxon>Streptomyces</taxon>
    </lineage>
</organism>
<keyword id="KW-0963">Cytoplasm</keyword>
<keyword id="KW-0269">Exonuclease</keyword>
<keyword id="KW-0378">Hydrolase</keyword>
<keyword id="KW-0540">Nuclease</keyword>
<dbReference type="EC" id="3.1.11.6" evidence="1"/>
<dbReference type="EMBL" id="AP009493">
    <property type="protein sequence ID" value="BAG19303.1"/>
    <property type="molecule type" value="Genomic_DNA"/>
</dbReference>
<dbReference type="RefSeq" id="WP_012379226.1">
    <property type="nucleotide sequence ID" value="NC_010572.1"/>
</dbReference>
<dbReference type="SMR" id="B1W2D9"/>
<dbReference type="KEGG" id="sgr:SGR_2474"/>
<dbReference type="PATRIC" id="fig|455632.4.peg.2518"/>
<dbReference type="eggNOG" id="COG1570">
    <property type="taxonomic scope" value="Bacteria"/>
</dbReference>
<dbReference type="HOGENOM" id="CLU_023625_2_1_11"/>
<dbReference type="Proteomes" id="UP000001685">
    <property type="component" value="Chromosome"/>
</dbReference>
<dbReference type="GO" id="GO:0005737">
    <property type="term" value="C:cytoplasm"/>
    <property type="evidence" value="ECO:0007669"/>
    <property type="project" value="UniProtKB-SubCell"/>
</dbReference>
<dbReference type="GO" id="GO:0009318">
    <property type="term" value="C:exodeoxyribonuclease VII complex"/>
    <property type="evidence" value="ECO:0007669"/>
    <property type="project" value="InterPro"/>
</dbReference>
<dbReference type="GO" id="GO:0008855">
    <property type="term" value="F:exodeoxyribonuclease VII activity"/>
    <property type="evidence" value="ECO:0007669"/>
    <property type="project" value="UniProtKB-UniRule"/>
</dbReference>
<dbReference type="GO" id="GO:0003676">
    <property type="term" value="F:nucleic acid binding"/>
    <property type="evidence" value="ECO:0007669"/>
    <property type="project" value="InterPro"/>
</dbReference>
<dbReference type="GO" id="GO:0006308">
    <property type="term" value="P:DNA catabolic process"/>
    <property type="evidence" value="ECO:0007669"/>
    <property type="project" value="UniProtKB-UniRule"/>
</dbReference>
<dbReference type="CDD" id="cd04489">
    <property type="entry name" value="ExoVII_LU_OBF"/>
    <property type="match status" value="1"/>
</dbReference>
<dbReference type="HAMAP" id="MF_00378">
    <property type="entry name" value="Exonuc_7_L"/>
    <property type="match status" value="1"/>
</dbReference>
<dbReference type="InterPro" id="IPR003753">
    <property type="entry name" value="Exonuc_VII_L"/>
</dbReference>
<dbReference type="InterPro" id="IPR020579">
    <property type="entry name" value="Exonuc_VII_lsu_C"/>
</dbReference>
<dbReference type="InterPro" id="IPR025824">
    <property type="entry name" value="OB-fold_nuc-bd_dom"/>
</dbReference>
<dbReference type="NCBIfam" id="TIGR00237">
    <property type="entry name" value="xseA"/>
    <property type="match status" value="1"/>
</dbReference>
<dbReference type="PANTHER" id="PTHR30008">
    <property type="entry name" value="EXODEOXYRIBONUCLEASE 7 LARGE SUBUNIT"/>
    <property type="match status" value="1"/>
</dbReference>
<dbReference type="PANTHER" id="PTHR30008:SF0">
    <property type="entry name" value="EXODEOXYRIBONUCLEASE 7 LARGE SUBUNIT"/>
    <property type="match status" value="1"/>
</dbReference>
<dbReference type="Pfam" id="PF02601">
    <property type="entry name" value="Exonuc_VII_L"/>
    <property type="match status" value="2"/>
</dbReference>
<dbReference type="Pfam" id="PF13742">
    <property type="entry name" value="tRNA_anti_2"/>
    <property type="match status" value="1"/>
</dbReference>
<feature type="chain" id="PRO_1000122091" description="Exodeoxyribonuclease 7 large subunit">
    <location>
        <begin position="1"/>
        <end position="403"/>
    </location>
</feature>
<sequence length="403" mass="43854">MALNTSAEAPLPVGEVSRLIGGWIDRLGAIWVEGQITQLSRRPGAGVVFLTLRDPSHDISVSVTCFRQVFDRIADVVTEGARVVVLAKPEWYAPRGQLSLRATDIRPVGIGELLVRLEQLKKSLAAEGLFALDRKKPLPFLPQLVGLVCGRASAAERDVLENARRRWPAVRFEVRNTAVQGVNAVAQVVQAVEELDALQEVDVIVVARGGGSVEDLLPFSDEQLIRTVAACRTPVVSAIGHEPDSPLLDLVADLRASTPTDAAKKVVPDVGEELERVQQLRDRALRTVRGLLDREERGLAHALGRPAMERPHRLVDEREAEVDALLGRARRVLGHLLDRADSELSHTLARVVSLSPAATLERGYAVLQRPDGHVVRSPEEAGAPGEPLRARVSEGEFTVRVDG</sequence>
<protein>
    <recommendedName>
        <fullName evidence="1">Exodeoxyribonuclease 7 large subunit</fullName>
        <ecNumber evidence="1">3.1.11.6</ecNumber>
    </recommendedName>
    <alternativeName>
        <fullName evidence="1">Exodeoxyribonuclease VII large subunit</fullName>
        <shortName evidence="1">Exonuclease VII large subunit</shortName>
    </alternativeName>
</protein>